<sequence>MRHYEIVFIVHPDQSEQVPAMIERYKSTITSHGGQIHRVEDWGRRQLAYMIEKLAKAHYVCMNIECDQTTLDELEHAFKFNDAVLRHLIVKMKKAETGPSPMMKEVQREEAKKAAAAQPTEAQA</sequence>
<proteinExistence type="inferred from homology"/>
<organism>
    <name type="scientific">Burkholderia mallei (strain NCTC 10247)</name>
    <dbReference type="NCBI Taxonomy" id="320389"/>
    <lineage>
        <taxon>Bacteria</taxon>
        <taxon>Pseudomonadati</taxon>
        <taxon>Pseudomonadota</taxon>
        <taxon>Betaproteobacteria</taxon>
        <taxon>Burkholderiales</taxon>
        <taxon>Burkholderiaceae</taxon>
        <taxon>Burkholderia</taxon>
        <taxon>pseudomallei group</taxon>
    </lineage>
</organism>
<feature type="chain" id="PRO_1000005229" description="Small ribosomal subunit protein bS6">
    <location>
        <begin position="1"/>
        <end position="124"/>
    </location>
</feature>
<feature type="region of interest" description="Disordered" evidence="2">
    <location>
        <begin position="96"/>
        <end position="124"/>
    </location>
</feature>
<feature type="compositionally biased region" description="Low complexity" evidence="2">
    <location>
        <begin position="114"/>
        <end position="124"/>
    </location>
</feature>
<evidence type="ECO:0000255" key="1">
    <source>
        <dbReference type="HAMAP-Rule" id="MF_00360"/>
    </source>
</evidence>
<evidence type="ECO:0000256" key="2">
    <source>
        <dbReference type="SAM" id="MobiDB-lite"/>
    </source>
</evidence>
<evidence type="ECO:0000305" key="3"/>
<keyword id="KW-0687">Ribonucleoprotein</keyword>
<keyword id="KW-0689">Ribosomal protein</keyword>
<keyword id="KW-0694">RNA-binding</keyword>
<keyword id="KW-0699">rRNA-binding</keyword>
<name>RS6_BURM7</name>
<protein>
    <recommendedName>
        <fullName evidence="1">Small ribosomal subunit protein bS6</fullName>
    </recommendedName>
    <alternativeName>
        <fullName evidence="3">30S ribosomal protein S6</fullName>
    </alternativeName>
</protein>
<gene>
    <name evidence="1" type="primary">rpsF</name>
    <name type="ordered locus">BMA10247_1168</name>
</gene>
<reference key="1">
    <citation type="journal article" date="2010" name="Genome Biol. Evol.">
        <title>Continuing evolution of Burkholderia mallei through genome reduction and large-scale rearrangements.</title>
        <authorList>
            <person name="Losada L."/>
            <person name="Ronning C.M."/>
            <person name="DeShazer D."/>
            <person name="Woods D."/>
            <person name="Fedorova N."/>
            <person name="Kim H.S."/>
            <person name="Shabalina S.A."/>
            <person name="Pearson T.R."/>
            <person name="Brinkac L."/>
            <person name="Tan P."/>
            <person name="Nandi T."/>
            <person name="Crabtree J."/>
            <person name="Badger J."/>
            <person name="Beckstrom-Sternberg S."/>
            <person name="Saqib M."/>
            <person name="Schutzer S.E."/>
            <person name="Keim P."/>
            <person name="Nierman W.C."/>
        </authorList>
    </citation>
    <scope>NUCLEOTIDE SEQUENCE [LARGE SCALE GENOMIC DNA]</scope>
    <source>
        <strain>NCTC 10247</strain>
    </source>
</reference>
<comment type="function">
    <text evidence="1">Binds together with bS18 to 16S ribosomal RNA.</text>
</comment>
<comment type="similarity">
    <text evidence="1">Belongs to the bacterial ribosomal protein bS6 family.</text>
</comment>
<accession>A3MKD6</accession>
<dbReference type="EMBL" id="CP000548">
    <property type="protein sequence ID" value="ABO06594.1"/>
    <property type="molecule type" value="Genomic_DNA"/>
</dbReference>
<dbReference type="RefSeq" id="WP_004193673.1">
    <property type="nucleotide sequence ID" value="NZ_CP007802.1"/>
</dbReference>
<dbReference type="SMR" id="A3MKD6"/>
<dbReference type="GeneID" id="93060533"/>
<dbReference type="KEGG" id="bmaz:BM44_1936"/>
<dbReference type="KEGG" id="bmn:BMA10247_1168"/>
<dbReference type="PATRIC" id="fig|320389.8.peg.2173"/>
<dbReference type="GO" id="GO:0022627">
    <property type="term" value="C:cytosolic small ribosomal subunit"/>
    <property type="evidence" value="ECO:0007669"/>
    <property type="project" value="TreeGrafter"/>
</dbReference>
<dbReference type="GO" id="GO:0070181">
    <property type="term" value="F:small ribosomal subunit rRNA binding"/>
    <property type="evidence" value="ECO:0007669"/>
    <property type="project" value="TreeGrafter"/>
</dbReference>
<dbReference type="GO" id="GO:0003735">
    <property type="term" value="F:structural constituent of ribosome"/>
    <property type="evidence" value="ECO:0007669"/>
    <property type="project" value="InterPro"/>
</dbReference>
<dbReference type="GO" id="GO:0006412">
    <property type="term" value="P:translation"/>
    <property type="evidence" value="ECO:0007669"/>
    <property type="project" value="UniProtKB-UniRule"/>
</dbReference>
<dbReference type="CDD" id="cd00473">
    <property type="entry name" value="bS6"/>
    <property type="match status" value="1"/>
</dbReference>
<dbReference type="Gene3D" id="3.30.70.60">
    <property type="match status" value="1"/>
</dbReference>
<dbReference type="HAMAP" id="MF_00360">
    <property type="entry name" value="Ribosomal_bS6"/>
    <property type="match status" value="1"/>
</dbReference>
<dbReference type="InterPro" id="IPR000529">
    <property type="entry name" value="Ribosomal_bS6"/>
</dbReference>
<dbReference type="InterPro" id="IPR035980">
    <property type="entry name" value="Ribosomal_bS6_sf"/>
</dbReference>
<dbReference type="InterPro" id="IPR020814">
    <property type="entry name" value="Ribosomal_S6_plastid/chlpt"/>
</dbReference>
<dbReference type="InterPro" id="IPR014717">
    <property type="entry name" value="Transl_elong_EF1B/ribsomal_bS6"/>
</dbReference>
<dbReference type="NCBIfam" id="TIGR00166">
    <property type="entry name" value="S6"/>
    <property type="match status" value="1"/>
</dbReference>
<dbReference type="PANTHER" id="PTHR21011">
    <property type="entry name" value="MITOCHONDRIAL 28S RIBOSOMAL PROTEIN S6"/>
    <property type="match status" value="1"/>
</dbReference>
<dbReference type="PANTHER" id="PTHR21011:SF1">
    <property type="entry name" value="SMALL RIBOSOMAL SUBUNIT PROTEIN BS6M"/>
    <property type="match status" value="1"/>
</dbReference>
<dbReference type="Pfam" id="PF01250">
    <property type="entry name" value="Ribosomal_S6"/>
    <property type="match status" value="1"/>
</dbReference>
<dbReference type="SUPFAM" id="SSF54995">
    <property type="entry name" value="Ribosomal protein S6"/>
    <property type="match status" value="1"/>
</dbReference>